<organism>
    <name type="scientific">Pectobacterium carotovorum subsp. carotovorum (strain PC1)</name>
    <dbReference type="NCBI Taxonomy" id="561230"/>
    <lineage>
        <taxon>Bacteria</taxon>
        <taxon>Pseudomonadati</taxon>
        <taxon>Pseudomonadota</taxon>
        <taxon>Gammaproteobacteria</taxon>
        <taxon>Enterobacterales</taxon>
        <taxon>Pectobacteriaceae</taxon>
        <taxon>Pectobacterium</taxon>
    </lineage>
</organism>
<comment type="function">
    <text evidence="1">Tetrapolymerization of the monopyrrole PBG into the hydroxymethylbilane pre-uroporphyrinogen in several discrete steps.</text>
</comment>
<comment type="catalytic activity">
    <reaction evidence="1">
        <text>4 porphobilinogen + H2O = hydroxymethylbilane + 4 NH4(+)</text>
        <dbReference type="Rhea" id="RHEA:13185"/>
        <dbReference type="ChEBI" id="CHEBI:15377"/>
        <dbReference type="ChEBI" id="CHEBI:28938"/>
        <dbReference type="ChEBI" id="CHEBI:57845"/>
        <dbReference type="ChEBI" id="CHEBI:58126"/>
        <dbReference type="EC" id="2.5.1.61"/>
    </reaction>
</comment>
<comment type="cofactor">
    <cofactor evidence="1">
        <name>dipyrromethane</name>
        <dbReference type="ChEBI" id="CHEBI:60342"/>
    </cofactor>
    <text evidence="1">Binds 1 dipyrromethane group covalently.</text>
</comment>
<comment type="pathway">
    <text evidence="1">Porphyrin-containing compound metabolism; protoporphyrin-IX biosynthesis; coproporphyrinogen-III from 5-aminolevulinate: step 2/4.</text>
</comment>
<comment type="subunit">
    <text evidence="1">Monomer.</text>
</comment>
<comment type="miscellaneous">
    <text evidence="1">The porphobilinogen subunits are added to the dipyrromethane group.</text>
</comment>
<comment type="similarity">
    <text evidence="1">Belongs to the HMBS family.</text>
</comment>
<feature type="chain" id="PRO_1000204658" description="Porphobilinogen deaminase">
    <location>
        <begin position="1"/>
        <end position="313"/>
    </location>
</feature>
<feature type="modified residue" description="S-(dipyrrolylmethanemethyl)cysteine" evidence="1">
    <location>
        <position position="242"/>
    </location>
</feature>
<accession>C6DHC2</accession>
<name>HEM3_PECCP</name>
<evidence type="ECO:0000255" key="1">
    <source>
        <dbReference type="HAMAP-Rule" id="MF_00260"/>
    </source>
</evidence>
<reference key="1">
    <citation type="submission" date="2009-07" db="EMBL/GenBank/DDBJ databases">
        <title>Complete sequence of Pectobacterium carotovorum subsp. carotovorum PC1.</title>
        <authorList>
            <consortium name="US DOE Joint Genome Institute"/>
            <person name="Lucas S."/>
            <person name="Copeland A."/>
            <person name="Lapidus A."/>
            <person name="Glavina del Rio T."/>
            <person name="Tice H."/>
            <person name="Bruce D."/>
            <person name="Goodwin L."/>
            <person name="Pitluck S."/>
            <person name="Munk A.C."/>
            <person name="Brettin T."/>
            <person name="Detter J.C."/>
            <person name="Han C."/>
            <person name="Tapia R."/>
            <person name="Larimer F."/>
            <person name="Land M."/>
            <person name="Hauser L."/>
            <person name="Kyrpides N."/>
            <person name="Mikhailova N."/>
            <person name="Balakrishnan V."/>
            <person name="Glasner J."/>
            <person name="Perna N.T."/>
        </authorList>
    </citation>
    <scope>NUCLEOTIDE SEQUENCE [LARGE SCALE GENOMIC DNA]</scope>
    <source>
        <strain>PC1</strain>
    </source>
</reference>
<protein>
    <recommendedName>
        <fullName evidence="1">Porphobilinogen deaminase</fullName>
        <shortName evidence="1">PBG</shortName>
        <ecNumber evidence="1">2.5.1.61</ecNumber>
    </recommendedName>
    <alternativeName>
        <fullName evidence="1">Hydroxymethylbilane synthase</fullName>
        <shortName evidence="1">HMBS</shortName>
    </alternativeName>
    <alternativeName>
        <fullName evidence="1">Pre-uroporphyrinogen synthase</fullName>
    </alternativeName>
</protein>
<proteinExistence type="inferred from homology"/>
<dbReference type="EC" id="2.5.1.61" evidence="1"/>
<dbReference type="EMBL" id="CP001657">
    <property type="protein sequence ID" value="ACT14995.1"/>
    <property type="molecule type" value="Genomic_DNA"/>
</dbReference>
<dbReference type="SMR" id="C6DHC2"/>
<dbReference type="STRING" id="561230.PC1_3980"/>
<dbReference type="KEGG" id="pct:PC1_3980"/>
<dbReference type="eggNOG" id="COG0181">
    <property type="taxonomic scope" value="Bacteria"/>
</dbReference>
<dbReference type="HOGENOM" id="CLU_019704_0_2_6"/>
<dbReference type="OrthoDB" id="9810298at2"/>
<dbReference type="UniPathway" id="UPA00251">
    <property type="reaction ID" value="UER00319"/>
</dbReference>
<dbReference type="Proteomes" id="UP000002736">
    <property type="component" value="Chromosome"/>
</dbReference>
<dbReference type="GO" id="GO:0005737">
    <property type="term" value="C:cytoplasm"/>
    <property type="evidence" value="ECO:0007669"/>
    <property type="project" value="TreeGrafter"/>
</dbReference>
<dbReference type="GO" id="GO:0004418">
    <property type="term" value="F:hydroxymethylbilane synthase activity"/>
    <property type="evidence" value="ECO:0007669"/>
    <property type="project" value="UniProtKB-UniRule"/>
</dbReference>
<dbReference type="GO" id="GO:0006782">
    <property type="term" value="P:protoporphyrinogen IX biosynthetic process"/>
    <property type="evidence" value="ECO:0007669"/>
    <property type="project" value="UniProtKB-UniRule"/>
</dbReference>
<dbReference type="CDD" id="cd13646">
    <property type="entry name" value="PBP2_EcHMBS_like"/>
    <property type="match status" value="1"/>
</dbReference>
<dbReference type="FunFam" id="3.30.160.40:FF:000002">
    <property type="entry name" value="Porphobilinogen deaminase"/>
    <property type="match status" value="1"/>
</dbReference>
<dbReference type="FunFam" id="3.40.190.10:FF:000004">
    <property type="entry name" value="Porphobilinogen deaminase"/>
    <property type="match status" value="1"/>
</dbReference>
<dbReference type="FunFam" id="3.40.190.10:FF:000005">
    <property type="entry name" value="Porphobilinogen deaminase"/>
    <property type="match status" value="1"/>
</dbReference>
<dbReference type="Gene3D" id="3.40.190.10">
    <property type="entry name" value="Periplasmic binding protein-like II"/>
    <property type="match status" value="2"/>
</dbReference>
<dbReference type="Gene3D" id="3.30.160.40">
    <property type="entry name" value="Porphobilinogen deaminase, C-terminal domain"/>
    <property type="match status" value="1"/>
</dbReference>
<dbReference type="HAMAP" id="MF_00260">
    <property type="entry name" value="Porphobil_deam"/>
    <property type="match status" value="1"/>
</dbReference>
<dbReference type="InterPro" id="IPR000860">
    <property type="entry name" value="HemC"/>
</dbReference>
<dbReference type="InterPro" id="IPR022419">
    <property type="entry name" value="Porphobilin_deaminase_cofac_BS"/>
</dbReference>
<dbReference type="InterPro" id="IPR022417">
    <property type="entry name" value="Porphobilin_deaminase_N"/>
</dbReference>
<dbReference type="InterPro" id="IPR022418">
    <property type="entry name" value="Porphobilinogen_deaminase_C"/>
</dbReference>
<dbReference type="InterPro" id="IPR036803">
    <property type="entry name" value="Porphobilinogen_deaminase_C_sf"/>
</dbReference>
<dbReference type="NCBIfam" id="TIGR00212">
    <property type="entry name" value="hemC"/>
    <property type="match status" value="1"/>
</dbReference>
<dbReference type="PANTHER" id="PTHR11557">
    <property type="entry name" value="PORPHOBILINOGEN DEAMINASE"/>
    <property type="match status" value="1"/>
</dbReference>
<dbReference type="PANTHER" id="PTHR11557:SF0">
    <property type="entry name" value="PORPHOBILINOGEN DEAMINASE"/>
    <property type="match status" value="1"/>
</dbReference>
<dbReference type="Pfam" id="PF01379">
    <property type="entry name" value="Porphobil_deam"/>
    <property type="match status" value="1"/>
</dbReference>
<dbReference type="Pfam" id="PF03900">
    <property type="entry name" value="Porphobil_deamC"/>
    <property type="match status" value="1"/>
</dbReference>
<dbReference type="PIRSF" id="PIRSF001438">
    <property type="entry name" value="4pyrrol_synth_OHMeBilane_synth"/>
    <property type="match status" value="1"/>
</dbReference>
<dbReference type="PRINTS" id="PR00151">
    <property type="entry name" value="PORPHBDMNASE"/>
</dbReference>
<dbReference type="SUPFAM" id="SSF53850">
    <property type="entry name" value="Periplasmic binding protein-like II"/>
    <property type="match status" value="1"/>
</dbReference>
<dbReference type="SUPFAM" id="SSF54782">
    <property type="entry name" value="Porphobilinogen deaminase (hydroxymethylbilane synthase), C-terminal domain"/>
    <property type="match status" value="1"/>
</dbReference>
<dbReference type="PROSITE" id="PS00533">
    <property type="entry name" value="PORPHOBILINOGEN_DEAM"/>
    <property type="match status" value="1"/>
</dbReference>
<sequence>MLANIIRIATRQSPLALWQARYVQQCLNHLYPDLHVELVPMVTRGDIILDTPLAKVGGKGLFVKELELALLEGRADIAVHSMKDVPVEFPDGLGLTTICERDDPRDAFVSNRYDSLEQLPEGSCVGTSSLRRQCQLRARRPDLVIRDLRGNVGTRLAKLDNGEYDAIILAVAGLKRLGLEERIRCALSPEESLPAVGQGAIGIECRLNDDRIRQLLAPLNHPATAARVQAERAMNVRLEGGCQVPIGSYAELEGDTLWLRALVGAPDGSQMIVGERRGNVSDAEQIGIALAEELLAKGASAILQAVYHESSSS</sequence>
<keyword id="KW-0627">Porphyrin biosynthesis</keyword>
<keyword id="KW-0808">Transferase</keyword>
<gene>
    <name evidence="1" type="primary">hemC</name>
    <name type="ordered locus">PC1_3980</name>
</gene>